<keyword id="KW-0044">Antibiotic</keyword>
<keyword id="KW-0929">Antimicrobial</keyword>
<keyword id="KW-0903">Direct protein sequencing</keyword>
<keyword id="KW-0391">Immunity</keyword>
<keyword id="KW-0399">Innate immunity</keyword>
<keyword id="KW-1185">Reference proteome</keyword>
<keyword id="KW-0964">Secreted</keyword>
<keyword id="KW-0732">Signal</keyword>
<gene>
    <name type="primary">CECA</name>
</gene>
<organism>
    <name type="scientific">Spodoptera litura</name>
    <name type="common">Asian cotton leafworm</name>
    <dbReference type="NCBI Taxonomy" id="69820"/>
    <lineage>
        <taxon>Eukaryota</taxon>
        <taxon>Metazoa</taxon>
        <taxon>Ecdysozoa</taxon>
        <taxon>Arthropoda</taxon>
        <taxon>Hexapoda</taxon>
        <taxon>Insecta</taxon>
        <taxon>Pterygota</taxon>
        <taxon>Neoptera</taxon>
        <taxon>Endopterygota</taxon>
        <taxon>Lepidoptera</taxon>
        <taxon>Glossata</taxon>
        <taxon>Ditrysia</taxon>
        <taxon>Noctuoidea</taxon>
        <taxon>Noctuidae</taxon>
        <taxon>Amphipyrinae</taxon>
        <taxon>Spodoptera</taxon>
    </lineage>
</organism>
<reference key="1">
    <citation type="journal article" date="2000" name="Comp. Biochem. Physiol.">
        <title>Antibacterial properties and partial cDNA sequences of cecropin-like antibacterial peptides from the common cutworm, Spodoptera litura.</title>
        <authorList>
            <person name="Choi C.S."/>
            <person name="Lee I.H."/>
            <person name="Kim E."/>
            <person name="Kim S.I."/>
            <person name="Kim H.R."/>
        </authorList>
    </citation>
    <scope>NUCLEOTIDE SEQUENCE [MRNA]</scope>
    <scope>PROTEIN SEQUENCE OF N-TERMINUS</scope>
    <scope>FUNCTION</scope>
    <scope>SUBCELLULAR LOCATION</scope>
    <scope>INDUCTION</scope>
    <source>
        <tissue>Larval hemolymph</tissue>
    </source>
</reference>
<name>CECA_SPOLT</name>
<proteinExistence type="evidence at protein level"/>
<accession>Q9XZG9</accession>
<dbReference type="EMBL" id="AF142341">
    <property type="protein sequence ID" value="AAD29438.1"/>
    <property type="molecule type" value="mRNA"/>
</dbReference>
<dbReference type="SMR" id="Q9XZG9"/>
<dbReference type="Proteomes" id="UP000301870">
    <property type="component" value="Unplaced"/>
</dbReference>
<dbReference type="GO" id="GO:0005576">
    <property type="term" value="C:extracellular region"/>
    <property type="evidence" value="ECO:0007669"/>
    <property type="project" value="UniProtKB-SubCell"/>
</dbReference>
<dbReference type="GO" id="GO:0019731">
    <property type="term" value="P:antibacterial humoral response"/>
    <property type="evidence" value="ECO:0007669"/>
    <property type="project" value="InterPro"/>
</dbReference>
<dbReference type="GO" id="GO:0050830">
    <property type="term" value="P:defense response to Gram-positive bacterium"/>
    <property type="evidence" value="ECO:0007669"/>
    <property type="project" value="UniProtKB-ARBA"/>
</dbReference>
<dbReference type="GO" id="GO:0045087">
    <property type="term" value="P:innate immune response"/>
    <property type="evidence" value="ECO:0007669"/>
    <property type="project" value="UniProtKB-KW"/>
</dbReference>
<dbReference type="InterPro" id="IPR000875">
    <property type="entry name" value="Cecropin"/>
</dbReference>
<dbReference type="Pfam" id="PF00272">
    <property type="entry name" value="Cecropin"/>
    <property type="match status" value="1"/>
</dbReference>
<dbReference type="PROSITE" id="PS00268">
    <property type="entry name" value="CECROPIN"/>
    <property type="match status" value="1"/>
</dbReference>
<comment type="function">
    <text evidence="1">Cecropins have lytic and antibacterial activity against several Gram-positive and Gram-negative bacteria.</text>
</comment>
<comment type="subcellular location">
    <subcellularLocation>
        <location evidence="1">Secreted</location>
    </subcellularLocation>
</comment>
<comment type="induction">
    <text evidence="1">Induced as part of the humoral response to a bacterial invasion. Transcripts appear within the immunized fat body.</text>
</comment>
<comment type="similarity">
    <text evidence="2">Belongs to the cecropin family.</text>
</comment>
<protein>
    <recommendedName>
        <fullName>Cecropin-A</fullName>
    </recommendedName>
</protein>
<sequence length="57" mass="6070">IFFFVFACLLALSAVSAAPEPRWKVFKKIEKVGRNVRDGIIKAGPAIGVLGQAKALG</sequence>
<evidence type="ECO:0000269" key="1">
    <source>
    </source>
</evidence>
<evidence type="ECO:0000305" key="2"/>
<feature type="signal peptide" evidence="1">
    <location>
        <begin position="1" status="less than"/>
        <end position="21"/>
    </location>
</feature>
<feature type="chain" id="PRO_0000004878" description="Cecropin-A">
    <location>
        <begin position="22"/>
        <end position="57"/>
    </location>
</feature>
<feature type="non-terminal residue">
    <location>
        <position position="1"/>
    </location>
</feature>